<reference key="1">
    <citation type="journal article" date="1990" name="Nucleic Acids Res.">
        <title>Nucleotide sequence of gene 2 of the UK tissue culture adapted strain of bovine rotavirus.</title>
        <authorList>
            <person name="Tian Y."/>
            <person name="Tarlow O."/>
            <person name="McCrae M.A."/>
        </authorList>
    </citation>
    <scope>NUCLEOTIDE SEQUENCE [GENOMIC RNA]</scope>
</reference>
<reference evidence="5" key="2">
    <citation type="journal article" date="2010" name="J. Mol. Biol.">
        <title>X-ray crystal structure of the rotavirus inner capsid particle at 3.8 A resolution.</title>
        <authorList>
            <person name="McClain B."/>
            <person name="Settembre E."/>
            <person name="Temple B.R."/>
            <person name="Bellamy A.R."/>
            <person name="Harrison S.C."/>
        </authorList>
    </citation>
    <scope>X-RAY CRYSTALLOGRAPHY (3.80 ANGSTROMS)</scope>
    <scope>FUNCTION</scope>
    <scope>SUBUNIT</scope>
    <scope>INTERACTION WITH THE INTERMEDIATE CAPSID PROTEIN VP6</scope>
    <scope>DOMAIN</scope>
    <scope>SUBCELLULAR LOCATION</scope>
</reference>
<accession>P17462</accession>
<comment type="function">
    <text evidence="1 4">Inner capsid protein that self-assembles to form an icosahedral capsid with a T=2 symmetry, which consists of 120 copies of VP2, with channels at each of its five-fold vertices. This capsid constitutes the innermost concentric layer of the viral mature particle (PubMed:20122940). It encapsidates the polymerase VP1, the capping enzyme VP3 and the genomic dsRNA, thereby defining the core (PubMed:20122940). The innermost VP2 capsid and the intermediate VP6 capsid remain intact following cell entry to protect the dsRNA from degradation and to prevent unfavorable antiviral responses in the host cell during all the replication cycle of the virus (PubMed:20122940). Nascent transcripts are transcribed within the structural confines of this double-layered particle (DLP) and are extruded through the channels formed by VP2 N-termini (PubMed:20122940). VP2 is required for the replicase activity of VP1 polymerase (By similarity). Probably recruits a copy of a VP1-VP3 complex, potentially along with a segment of plus-strand RNA, as a decamer of VP2 assembles (PubMed:20122940). May activate the autoinhibited VP1/RNA complex to coordinate packaging and genome replication (By similarity).</text>
</comment>
<comment type="subunit">
    <text evidence="1 3">Homodecamer; each decamer is made up of two conformers of VP2, called VP2A and VP2B (PubMed:20122940). Interacts with a VP1-VP3 complex (PubMed:20122940). Interacts with the intermediate capsid protein VP6 (PubMed:20122940). Interacts with NSP5 (By similarity). Interacts (via N-terminus) with NSP2 (By similarity).</text>
</comment>
<comment type="subcellular location">
    <subcellularLocation>
        <location evidence="1 3">Virion</location>
    </subcellularLocation>
    <text evidence="1 3">Inner capsid protein. Also found in spherical cytoplasmic structures, called virus factories, that appear early after infection and are the site of viral replication and packaging (Potential).</text>
</comment>
<comment type="domain">
    <text evidence="1 3">The N-terminus binds RNA (By similarity). It is necessary for encapsidation of VP1 and VP3 (By similarity). The N-termini of 10 VP2 molecules form a cylindrical hub underneath each 5-fold axis of the inner capsid (PubMed:20122940).</text>
</comment>
<comment type="PTM">
    <text evidence="1">Sumoylated with SUMO1 and SUMO2. Sumoylation of viral proteins seems to have a positive role on viral replication.</text>
</comment>
<comment type="similarity">
    <text evidence="1">Belongs to the rotavirus VP2 family.</text>
</comment>
<name>VP2_ROTBU</name>
<feature type="chain" id="PRO_0000149532" description="Inner capsid protein VP2">
    <location>
        <begin position="1"/>
        <end position="881"/>
    </location>
</feature>
<feature type="region of interest" description="5-fold hub; involved in the encapsidation of VP1 and VP3" evidence="1 3">
    <location>
        <begin position="1"/>
        <end position="80"/>
    </location>
</feature>
<feature type="region of interest" description="Disordered" evidence="2">
    <location>
        <begin position="1"/>
        <end position="45"/>
    </location>
</feature>
<feature type="region of interest" description="Hydrophobic" evidence="1">
    <location>
        <begin position="394"/>
        <end position="414"/>
    </location>
</feature>
<feature type="region of interest" description="Hydrophobic" evidence="1">
    <location>
        <begin position="422"/>
        <end position="442"/>
    </location>
</feature>
<feature type="compositionally biased region" description="Basic and acidic residues" evidence="2">
    <location>
        <begin position="19"/>
        <end position="30"/>
    </location>
</feature>
<feature type="site" description="Interaction with the intermediate capsid protein VP6" evidence="1 3">
    <location>
        <position position="220"/>
    </location>
</feature>
<feature type="site" description="Interaction with the intermediate capsid protein VP6" evidence="1 3">
    <location>
        <position position="224"/>
    </location>
</feature>
<feature type="site" description="Interaction with the intermediate capsid protein VP6" evidence="1 3">
    <location>
        <position position="228"/>
    </location>
</feature>
<feature type="site" description="Interaction with the intermediate capsid protein VP6" evidence="1 3">
    <location>
        <position position="840"/>
    </location>
</feature>
<feature type="site" description="Interaction with the intermediate capsid protein VP6" evidence="1 3">
    <location>
        <position position="842"/>
    </location>
</feature>
<organismHost>
    <name type="scientific">Bos taurus</name>
    <name type="common">Bovine</name>
    <dbReference type="NCBI Taxonomy" id="9913"/>
</organismHost>
<dbReference type="EMBL" id="X52589">
    <property type="protein sequence ID" value="CAA36825.1"/>
    <property type="molecule type" value="Genomic_RNA"/>
</dbReference>
<dbReference type="PDB" id="3KZ4">
    <property type="method" value="X-ray"/>
    <property type="resolution" value="3.80 A"/>
    <property type="chains" value="A/B=1-881"/>
</dbReference>
<dbReference type="PDBsum" id="3KZ4"/>
<dbReference type="SMR" id="P17462"/>
<dbReference type="Proteomes" id="UP000008657">
    <property type="component" value="Genome"/>
</dbReference>
<dbReference type="GO" id="GO:0039616">
    <property type="term" value="C:T=2 icosahedral viral capsid"/>
    <property type="evidence" value="ECO:0000314"/>
    <property type="project" value="UniProtKB"/>
</dbReference>
<dbReference type="GO" id="GO:0039625">
    <property type="term" value="C:viral inner capsid"/>
    <property type="evidence" value="ECO:0000314"/>
    <property type="project" value="UniProtKB"/>
</dbReference>
<dbReference type="GO" id="GO:0019013">
    <property type="term" value="C:viral nucleocapsid"/>
    <property type="evidence" value="ECO:0007669"/>
    <property type="project" value="UniProtKB-UniRule"/>
</dbReference>
<dbReference type="GO" id="GO:0003723">
    <property type="term" value="F:RNA binding"/>
    <property type="evidence" value="ECO:0007669"/>
    <property type="project" value="UniProtKB-UniRule"/>
</dbReference>
<dbReference type="HAMAP" id="MF_04123">
    <property type="entry name" value="Rota_VP2"/>
    <property type="match status" value="1"/>
</dbReference>
<dbReference type="HAMAP" id="MF_04127">
    <property type="entry name" value="Rota_VP2_A"/>
    <property type="match status" value="1"/>
</dbReference>
<dbReference type="InterPro" id="IPR007779">
    <property type="entry name" value="Rotavirus_VP2"/>
</dbReference>
<dbReference type="Pfam" id="PF05087">
    <property type="entry name" value="Rota_VP2"/>
    <property type="match status" value="1"/>
</dbReference>
<keyword id="KW-0002">3D-structure</keyword>
<keyword id="KW-0167">Capsid protein</keyword>
<keyword id="KW-1153">Inner capsid protein</keyword>
<keyword id="KW-0677">Repeat</keyword>
<keyword id="KW-0694">RNA-binding</keyword>
<keyword id="KW-1141">T=2 icosahedral capsid protein</keyword>
<keyword id="KW-0832">Ubl conjugation</keyword>
<keyword id="KW-0946">Virion</keyword>
<sequence length="881" mass="102488">MAYRKRGATVEADINNNDRMQEKDDEKQDQNNRMQLSDKVLSKKEEVVTDSQEEIKIRDEVKKSTKEESKQLLEVLKTKEEHQKEIQYEILQKTIPTFEPKESILKKLEDIKPEQAKKQTKLFRIFEPRQLPIYRANGEKELRNRWYWKLKKDTLPDGDYDVREYFLNLYDQVLTEMPDYLLLKDMAVENKNSRDAGKVVDSETASICDAIFQDEETEGAVRRFIAEMRQRVQADRNVVNYPSILHPIDYAFNEYFLQHQLVEPLNNDIIFNYIPERIRNDVNYILNMDRNLPSTARYIRPNLLQDRLNLHDNFESLWDTITTSNYILARSVVPDLKELVSTEAQIQKMSQDLQLEALTIQSETQFLTGINSQAANDCFKTLIAAMLSQRTMSLDFVTTNYMSLISGMWLLTVVPNDMFIRESLVACQLAIVNTIIYPAFGMQRMHYRNGDPQTPFQIAEQQIRKFSGSGIGWHFVNNNQFRQVVIDGVLNQVLNDNIRNVHVIKQLMQALMQLSRQQFPTMPVDYKRSIQRGILLLSNRLGQLVDLTRLLAYNYETLMACVTMNMQHVQTLTTEKLQLTSVTSLCMLIGNATVIPSPQTLFHYYNVNVNFHSNYNERINDAVAIITAANRLNLYQKKMKAIVEDFLKRLHIFDVARVPDDQMYRLRDRLRLLPVEVRRLDIFNLILMNMDQIERASDKIAQGVIIAYRDMQLERDEMYGYVNIARNLDGFQQINLEELMRTGDYAQITNMLLNNQPVALVGALPFVTDSSVISLIAKLDATVFAQIVKLRKVDTLKPILYKINSDSNDFYLVANYDWVPTSTTKVYKQVPQQFDFRNSMHMLTSNLTFTVYSDLLAFVSADTVEPINAVAFDNMRIMNEL</sequence>
<organism>
    <name type="scientific">Rotavirus A (strain RVA/Cow/United Kingdom/UK/1975/G6P7[5])</name>
    <name type="common">RV-A</name>
    <dbReference type="NCBI Taxonomy" id="10934"/>
    <lineage>
        <taxon>Viruses</taxon>
        <taxon>Riboviria</taxon>
        <taxon>Orthornavirae</taxon>
        <taxon>Duplornaviricota</taxon>
        <taxon>Resentoviricetes</taxon>
        <taxon>Reovirales</taxon>
        <taxon>Sedoreoviridae</taxon>
        <taxon>Rotavirus</taxon>
        <taxon>Rotavirus A</taxon>
    </lineage>
</organism>
<proteinExistence type="evidence at protein level"/>
<evidence type="ECO:0000255" key="1">
    <source>
        <dbReference type="HAMAP-Rule" id="MF_04127"/>
    </source>
</evidence>
<evidence type="ECO:0000256" key="2">
    <source>
        <dbReference type="SAM" id="MobiDB-lite"/>
    </source>
</evidence>
<evidence type="ECO:0000269" key="3">
    <source>
    </source>
</evidence>
<evidence type="ECO:0000305" key="4">
    <source>
    </source>
</evidence>
<evidence type="ECO:0007744" key="5">
    <source>
        <dbReference type="PDB" id="3KZ4"/>
    </source>
</evidence>
<protein>
    <recommendedName>
        <fullName evidence="1">Inner capsid protein VP2</fullName>
    </recommendedName>
</protein>